<gene>
    <name type="primary">C5AR1</name>
    <name type="synonym">C5R1</name>
</gene>
<proteinExistence type="evidence at transcript level"/>
<evidence type="ECO:0000250" key="1">
    <source>
        <dbReference type="UniProtKB" id="P21730"/>
    </source>
</evidence>
<evidence type="ECO:0000255" key="2"/>
<evidence type="ECO:0000255" key="3">
    <source>
        <dbReference type="PROSITE-ProRule" id="PRU00521"/>
    </source>
</evidence>
<evidence type="ECO:0000269" key="4">
    <source>
    </source>
</evidence>
<evidence type="ECO:0000305" key="5"/>
<reference key="1">
    <citation type="journal article" date="1998" name="Int. Immunol.">
        <title>Cloning and characterization of the guinea pig C5a anaphylatoxin receptor: interspecies diversity among the C5a receptors.</title>
        <authorList>
            <person name="Fukuoka Y."/>
            <person name="Ember J.A."/>
            <person name="Yasui A."/>
            <person name="Hugli T.E."/>
        </authorList>
    </citation>
    <scope>NUCLEOTIDE SEQUENCE [MRNA]</scope>
    <scope>FUNCTION</scope>
    <scope>SUBCELLULAR LOCATION</scope>
    <scope>TISSUE SPECIFICITY</scope>
    <source>
        <strain>Hartley</strain>
    </source>
</reference>
<sequence>MMVTVSYDYDYNSTFLPDGFVDNYVERLSFGDLVAVVIMVVVFLVGVPGNALVVWVTACEARRHINAIWFLNLAAADLLSCLALPILLVSTVHLNHWYFGDTACKVLPSLILLNMYTSILLLATISADRLLLVLSPIWCQRFRGGCLAWTACGLAWVLALLLSSPSFLYRRTHNEHFSFKVYCVTDYGRDISKERAVALVRLLVGFIVPLITLTACYTFLLLRTWSRKATRSAKTVKVVVAVVSSFFVFWLPYQVTGILLAWHSPNSATYRNTKALDAVCVAFAYINCCINPIIYVVAGHGFQGRLLKSLPSVLRNVLTEESLDKRHQSFARSTVDTMPQKSESV</sequence>
<comment type="function">
    <text evidence="1 4">Receptor for the chemotactic and inflammatory peptide anaphylatoxin C5a (PubMed:9576615). The ligand interacts with at least two sites on the receptor: a high-affinity site on the extracellular N-terminus, and a second site in the transmembrane region which activates downstream signaling events. Receptor activation stimulates chemotaxis, granule enzyme release, intracellular calcium release and superoxide anion production (By similarity).</text>
</comment>
<comment type="subunit">
    <text evidence="1">Homodimer. May also form higher-order oligomers. Interacts (when phosphorylated) with ARRB1 and ARRB2; the interaction is associated with internalization of C5aR.</text>
</comment>
<comment type="subcellular location">
    <subcellularLocation>
        <location evidence="4">Cell membrane</location>
        <topology evidence="1">Multi-pass membrane protein</topology>
    </subcellularLocation>
    <subcellularLocation>
        <location evidence="1">Cytoplasmic vesicle</location>
    </subcellularLocation>
    <text evidence="1">Phosphorylated C5aR colocalizes with ARRB1 and ARRB2 in cytoplasmic vesicles.</text>
</comment>
<comment type="tissue specificity">
    <text evidence="4">Expressed strongly in macrophages and spleen. Weak expression detected in lung, liver, brain, heart and kidney.</text>
</comment>
<comment type="PTM">
    <text evidence="1">Sulfation plays a critical role in the association of C5aR with C5a, but no significant role in the ability of the receptor to transduce a signal and mobilize calcium in response to a small peptide agonist.</text>
</comment>
<comment type="PTM">
    <text evidence="1">Phosphorylated on serine residues in response to C5a binding, resulting in internalization of the receptor and short-term desensitization to C5a.</text>
</comment>
<comment type="similarity">
    <text evidence="3">Belongs to the G-protein coupled receptor 1 family.</text>
</comment>
<accession>O70129</accession>
<protein>
    <recommendedName>
        <fullName>C5a anaphylatoxin chemotactic receptor 1</fullName>
    </recommendedName>
    <alternativeName>
        <fullName>C5a anaphylatoxin chemotactic receptor</fullName>
        <shortName>C5a-R</shortName>
        <shortName>C5aR</shortName>
    </alternativeName>
    <cdAntigenName>CD88</cdAntigenName>
</protein>
<feature type="chain" id="PRO_0000069207" description="C5a anaphylatoxin chemotactic receptor 1">
    <location>
        <begin position="1"/>
        <end position="345"/>
    </location>
</feature>
<feature type="topological domain" description="Extracellular" evidence="5">
    <location>
        <begin position="1"/>
        <end position="32"/>
    </location>
</feature>
<feature type="transmembrane region" description="Helical; Name=1" evidence="1">
    <location>
        <begin position="33"/>
        <end position="59"/>
    </location>
</feature>
<feature type="topological domain" description="Cytoplasmic" evidence="5">
    <location>
        <begin position="60"/>
        <end position="64"/>
    </location>
</feature>
<feature type="transmembrane region" description="Helical; Name=2" evidence="1">
    <location>
        <begin position="65"/>
        <end position="88"/>
    </location>
</feature>
<feature type="topological domain" description="Extracellular" evidence="5">
    <location>
        <begin position="89"/>
        <end position="105"/>
    </location>
</feature>
<feature type="transmembrane region" description="Helical; Name=3" evidence="1">
    <location>
        <begin position="106"/>
        <end position="127"/>
    </location>
</feature>
<feature type="topological domain" description="Cytoplasmic" evidence="5">
    <location>
        <begin position="128"/>
        <end position="148"/>
    </location>
</feature>
<feature type="transmembrane region" description="Helical; Name=4" evidence="1">
    <location>
        <begin position="149"/>
        <end position="169"/>
    </location>
</feature>
<feature type="topological domain" description="Extracellular" evidence="5">
    <location>
        <begin position="170"/>
        <end position="195"/>
    </location>
</feature>
<feature type="transmembrane region" description="Helical; Name=5" evidence="1">
    <location>
        <begin position="196"/>
        <end position="221"/>
    </location>
</feature>
<feature type="topological domain" description="Cytoplasmic" evidence="5">
    <location>
        <begin position="222"/>
        <end position="237"/>
    </location>
</feature>
<feature type="transmembrane region" description="Helical; Name=6" evidence="1">
    <location>
        <begin position="238"/>
        <end position="260"/>
    </location>
</feature>
<feature type="topological domain" description="Extracellular" evidence="5">
    <location>
        <begin position="261"/>
        <end position="277"/>
    </location>
</feature>
<feature type="transmembrane region" description="Helical; Name=7" evidence="1">
    <location>
        <begin position="278"/>
        <end position="298"/>
    </location>
</feature>
<feature type="topological domain" description="Cytoplasmic" evidence="5">
    <location>
        <begin position="299"/>
        <end position="345"/>
    </location>
</feature>
<feature type="modified residue" description="Sulfotyrosine" evidence="1">
    <location>
        <position position="9"/>
    </location>
</feature>
<feature type="modified residue" description="Sulfotyrosine" evidence="1">
    <location>
        <position position="11"/>
    </location>
</feature>
<feature type="modified residue" description="Phosphoserine" evidence="1">
    <location>
        <position position="309"/>
    </location>
</feature>
<feature type="modified residue" description="Phosphoserine" evidence="1">
    <location>
        <position position="312"/>
    </location>
</feature>
<feature type="modified residue" description="Phosphoserine" evidence="1">
    <location>
        <position position="322"/>
    </location>
</feature>
<feature type="modified residue" description="Phosphoserine" evidence="1">
    <location>
        <position position="329"/>
    </location>
</feature>
<feature type="modified residue" description="Phosphoserine" evidence="1">
    <location>
        <position position="333"/>
    </location>
</feature>
<feature type="glycosylation site" description="N-linked (GlcNAc...) asparagine" evidence="2">
    <location>
        <position position="12"/>
    </location>
</feature>
<feature type="disulfide bond" evidence="3">
    <location>
        <begin position="104"/>
        <end position="183"/>
    </location>
</feature>
<name>C5AR1_CAVPO</name>
<organism>
    <name type="scientific">Cavia porcellus</name>
    <name type="common">Guinea pig</name>
    <dbReference type="NCBI Taxonomy" id="10141"/>
    <lineage>
        <taxon>Eukaryota</taxon>
        <taxon>Metazoa</taxon>
        <taxon>Chordata</taxon>
        <taxon>Craniata</taxon>
        <taxon>Vertebrata</taxon>
        <taxon>Euteleostomi</taxon>
        <taxon>Mammalia</taxon>
        <taxon>Eutheria</taxon>
        <taxon>Euarchontoglires</taxon>
        <taxon>Glires</taxon>
        <taxon>Rodentia</taxon>
        <taxon>Hystricomorpha</taxon>
        <taxon>Caviidae</taxon>
        <taxon>Cavia</taxon>
    </lineage>
</organism>
<dbReference type="EMBL" id="U86103">
    <property type="protein sequence ID" value="AAC40074.1"/>
    <property type="molecule type" value="mRNA"/>
</dbReference>
<dbReference type="RefSeq" id="NP_001166393.1">
    <property type="nucleotide sequence ID" value="NM_001172922.1"/>
</dbReference>
<dbReference type="SMR" id="O70129"/>
<dbReference type="FunCoup" id="O70129">
    <property type="interactions" value="580"/>
</dbReference>
<dbReference type="STRING" id="10141.ENSCPOP00000028128"/>
<dbReference type="ChEMBL" id="CHEMBL2861"/>
<dbReference type="GlyCosmos" id="O70129">
    <property type="glycosylation" value="1 site, No reported glycans"/>
</dbReference>
<dbReference type="GeneID" id="100135489"/>
<dbReference type="KEGG" id="cpoc:100135489"/>
<dbReference type="CTD" id="728"/>
<dbReference type="eggNOG" id="ENOG502R35Z">
    <property type="taxonomic scope" value="Eukaryota"/>
</dbReference>
<dbReference type="InParanoid" id="O70129"/>
<dbReference type="OrthoDB" id="9835842at2759"/>
<dbReference type="Proteomes" id="UP000005447">
    <property type="component" value="Unassembled WGS sequence"/>
</dbReference>
<dbReference type="GO" id="GO:0045177">
    <property type="term" value="C:apical part of cell"/>
    <property type="evidence" value="ECO:0000250"/>
    <property type="project" value="UniProtKB"/>
</dbReference>
<dbReference type="GO" id="GO:0016323">
    <property type="term" value="C:basolateral plasma membrane"/>
    <property type="evidence" value="ECO:0000250"/>
    <property type="project" value="UniProtKB"/>
</dbReference>
<dbReference type="GO" id="GO:0031410">
    <property type="term" value="C:cytoplasmic vesicle"/>
    <property type="evidence" value="ECO:0007669"/>
    <property type="project" value="UniProtKB-KW"/>
</dbReference>
<dbReference type="GO" id="GO:0004878">
    <property type="term" value="F:complement component C5a receptor activity"/>
    <property type="evidence" value="ECO:0000250"/>
    <property type="project" value="UniProtKB"/>
</dbReference>
<dbReference type="GO" id="GO:0004930">
    <property type="term" value="F:G protein-coupled receptor activity"/>
    <property type="evidence" value="ECO:0007669"/>
    <property type="project" value="UniProtKB-KW"/>
</dbReference>
<dbReference type="GO" id="GO:0006935">
    <property type="term" value="P:chemotaxis"/>
    <property type="evidence" value="ECO:0007669"/>
    <property type="project" value="UniProtKB-KW"/>
</dbReference>
<dbReference type="GO" id="GO:0006954">
    <property type="term" value="P:inflammatory response"/>
    <property type="evidence" value="ECO:0007669"/>
    <property type="project" value="TreeGrafter"/>
</dbReference>
<dbReference type="GO" id="GO:0042789">
    <property type="term" value="P:mRNA transcription by RNA polymerase II"/>
    <property type="evidence" value="ECO:0000250"/>
    <property type="project" value="UniProtKB"/>
</dbReference>
<dbReference type="GO" id="GO:0007200">
    <property type="term" value="P:phospholipase C-activating G protein-coupled receptor signaling pathway"/>
    <property type="evidence" value="ECO:0007669"/>
    <property type="project" value="TreeGrafter"/>
</dbReference>
<dbReference type="GO" id="GO:0007204">
    <property type="term" value="P:positive regulation of cytosolic calcium ion concentration"/>
    <property type="evidence" value="ECO:0007669"/>
    <property type="project" value="TreeGrafter"/>
</dbReference>
<dbReference type="GO" id="GO:0050679">
    <property type="term" value="P:positive regulation of epithelial cell proliferation"/>
    <property type="evidence" value="ECO:0000250"/>
    <property type="project" value="UniProtKB"/>
</dbReference>
<dbReference type="GO" id="GO:0070374">
    <property type="term" value="P:positive regulation of ERK1 and ERK2 cascade"/>
    <property type="evidence" value="ECO:0000250"/>
    <property type="project" value="UniProtKB"/>
</dbReference>
<dbReference type="FunFam" id="1.20.1070.10:FF:000034">
    <property type="entry name" value="G-protein coupled receptor 1"/>
    <property type="match status" value="1"/>
</dbReference>
<dbReference type="Gene3D" id="1.20.1070.10">
    <property type="entry name" value="Rhodopsin 7-helix transmembrane proteins"/>
    <property type="match status" value="1"/>
</dbReference>
<dbReference type="InterPro" id="IPR002234">
    <property type="entry name" value="Anphylx_rcpt_C3a/C5a1-2"/>
</dbReference>
<dbReference type="InterPro" id="IPR000826">
    <property type="entry name" value="Formyl_rcpt-rel"/>
</dbReference>
<dbReference type="InterPro" id="IPR000276">
    <property type="entry name" value="GPCR_Rhodpsn"/>
</dbReference>
<dbReference type="InterPro" id="IPR017452">
    <property type="entry name" value="GPCR_Rhodpsn_7TM"/>
</dbReference>
<dbReference type="PANTHER" id="PTHR24225:SF29">
    <property type="entry name" value="C5A ANAPHYLATOXIN CHEMOTACTIC RECEPTOR 1"/>
    <property type="match status" value="1"/>
</dbReference>
<dbReference type="PANTHER" id="PTHR24225">
    <property type="entry name" value="CHEMOTACTIC RECEPTOR"/>
    <property type="match status" value="1"/>
</dbReference>
<dbReference type="Pfam" id="PF00001">
    <property type="entry name" value="7tm_1"/>
    <property type="match status" value="1"/>
</dbReference>
<dbReference type="PRINTS" id="PR01104">
    <property type="entry name" value="ANPHYLATOXNR"/>
</dbReference>
<dbReference type="PRINTS" id="PR00426">
    <property type="entry name" value="C5ANPHYLTXNR"/>
</dbReference>
<dbReference type="PRINTS" id="PR00237">
    <property type="entry name" value="GPCRRHODOPSN"/>
</dbReference>
<dbReference type="SUPFAM" id="SSF81321">
    <property type="entry name" value="Family A G protein-coupled receptor-like"/>
    <property type="match status" value="1"/>
</dbReference>
<dbReference type="PROSITE" id="PS50262">
    <property type="entry name" value="G_PROTEIN_RECEP_F1_2"/>
    <property type="match status" value="1"/>
</dbReference>
<keyword id="KW-1003">Cell membrane</keyword>
<keyword id="KW-0145">Chemotaxis</keyword>
<keyword id="KW-0968">Cytoplasmic vesicle</keyword>
<keyword id="KW-1015">Disulfide bond</keyword>
<keyword id="KW-0297">G-protein coupled receptor</keyword>
<keyword id="KW-0325">Glycoprotein</keyword>
<keyword id="KW-0472">Membrane</keyword>
<keyword id="KW-0597">Phosphoprotein</keyword>
<keyword id="KW-0675">Receptor</keyword>
<keyword id="KW-1185">Reference proteome</keyword>
<keyword id="KW-0765">Sulfation</keyword>
<keyword id="KW-0807">Transducer</keyword>
<keyword id="KW-0812">Transmembrane</keyword>
<keyword id="KW-1133">Transmembrane helix</keyword>